<organism>
    <name type="scientific">Shigella boydii serotype 18 (strain CDC 3083-94 / BS512)</name>
    <dbReference type="NCBI Taxonomy" id="344609"/>
    <lineage>
        <taxon>Bacteria</taxon>
        <taxon>Pseudomonadati</taxon>
        <taxon>Pseudomonadota</taxon>
        <taxon>Gammaproteobacteria</taxon>
        <taxon>Enterobacterales</taxon>
        <taxon>Enterobacteriaceae</taxon>
        <taxon>Shigella</taxon>
    </lineage>
</organism>
<feature type="chain" id="PRO_1000125160" description="Fluoride-specific ion channel FluC">
    <location>
        <begin position="1"/>
        <end position="127"/>
    </location>
</feature>
<feature type="transmembrane region" description="Helical" evidence="1">
    <location>
        <begin position="4"/>
        <end position="24"/>
    </location>
</feature>
<feature type="transmembrane region" description="Helical" evidence="1">
    <location>
        <begin position="35"/>
        <end position="55"/>
    </location>
</feature>
<feature type="transmembrane region" description="Helical" evidence="1">
    <location>
        <begin position="71"/>
        <end position="91"/>
    </location>
</feature>
<feature type="transmembrane region" description="Helical" evidence="1">
    <location>
        <begin position="103"/>
        <end position="123"/>
    </location>
</feature>
<feature type="binding site" evidence="1">
    <location>
        <position position="75"/>
    </location>
    <ligand>
        <name>Na(+)</name>
        <dbReference type="ChEBI" id="CHEBI:29101"/>
        <note>structural</note>
    </ligand>
</feature>
<feature type="binding site" evidence="1">
    <location>
        <position position="78"/>
    </location>
    <ligand>
        <name>Na(+)</name>
        <dbReference type="ChEBI" id="CHEBI:29101"/>
        <note>structural</note>
    </ligand>
</feature>
<name>FLUC_SHIB3</name>
<keyword id="KW-0997">Cell inner membrane</keyword>
<keyword id="KW-1003">Cell membrane</keyword>
<keyword id="KW-0407">Ion channel</keyword>
<keyword id="KW-0406">Ion transport</keyword>
<keyword id="KW-0472">Membrane</keyword>
<keyword id="KW-0479">Metal-binding</keyword>
<keyword id="KW-1185">Reference proteome</keyword>
<keyword id="KW-0915">Sodium</keyword>
<keyword id="KW-0812">Transmembrane</keyword>
<keyword id="KW-1133">Transmembrane helix</keyword>
<keyword id="KW-0813">Transport</keyword>
<accession>B2TTI6</accession>
<sequence length="127" mass="13795">MLQLLLAVFIGGGTGSVARWLLSMRFNPLHQAIPLGTLTANLIGAFIIGMGFAWFSRMTNIDPVWKVLITTGFCGGLTTFSTFSAEVVFLLQEGRFGWALLNVFVNLLGSFAMTALAFWLFSASTAH</sequence>
<reference key="1">
    <citation type="submission" date="2008-05" db="EMBL/GenBank/DDBJ databases">
        <title>Complete sequence of Shigella boydii serotype 18 strain BS512.</title>
        <authorList>
            <person name="Rasko D.A."/>
            <person name="Rosovitz M."/>
            <person name="Maurelli A.T."/>
            <person name="Myers G."/>
            <person name="Seshadri R."/>
            <person name="Cer R."/>
            <person name="Jiang L."/>
            <person name="Ravel J."/>
            <person name="Sebastian Y."/>
        </authorList>
    </citation>
    <scope>NUCLEOTIDE SEQUENCE [LARGE SCALE GENOMIC DNA]</scope>
    <source>
        <strain>CDC 3083-94 / BS512</strain>
    </source>
</reference>
<gene>
    <name evidence="1" type="primary">fluC</name>
    <name evidence="1" type="synonym">crcB</name>
    <name type="ordered locus">SbBS512_E0539</name>
</gene>
<proteinExistence type="inferred from homology"/>
<evidence type="ECO:0000255" key="1">
    <source>
        <dbReference type="HAMAP-Rule" id="MF_00454"/>
    </source>
</evidence>
<protein>
    <recommendedName>
        <fullName evidence="1">Fluoride-specific ion channel FluC</fullName>
    </recommendedName>
</protein>
<comment type="function">
    <text evidence="1">Fluoride-specific ion channel. Important for reducing fluoride concentration in the cell, thus reducing its toxicity.</text>
</comment>
<comment type="catalytic activity">
    <reaction evidence="1">
        <text>fluoride(in) = fluoride(out)</text>
        <dbReference type="Rhea" id="RHEA:76159"/>
        <dbReference type="ChEBI" id="CHEBI:17051"/>
    </reaction>
    <physiologicalReaction direction="left-to-right" evidence="1">
        <dbReference type="Rhea" id="RHEA:76160"/>
    </physiologicalReaction>
</comment>
<comment type="activity regulation">
    <text evidence="1">Na(+) is not transported, but it plays an essential structural role and its presence is essential for fluoride channel function.</text>
</comment>
<comment type="subcellular location">
    <subcellularLocation>
        <location evidence="1">Cell inner membrane</location>
        <topology evidence="1">Multi-pass membrane protein</topology>
    </subcellularLocation>
</comment>
<comment type="similarity">
    <text evidence="1">Belongs to the fluoride channel Fluc/FEX (TC 1.A.43) family.</text>
</comment>
<dbReference type="EMBL" id="CP001063">
    <property type="protein sequence ID" value="ACD07361.1"/>
    <property type="molecule type" value="Genomic_DNA"/>
</dbReference>
<dbReference type="RefSeq" id="WP_000939749.1">
    <property type="nucleotide sequence ID" value="NC_010658.1"/>
</dbReference>
<dbReference type="SMR" id="B2TTI6"/>
<dbReference type="STRING" id="344609.SbBS512_E0539"/>
<dbReference type="KEGG" id="sbc:SbBS512_E0539"/>
<dbReference type="HOGENOM" id="CLU_114342_3_3_6"/>
<dbReference type="Proteomes" id="UP000001030">
    <property type="component" value="Chromosome"/>
</dbReference>
<dbReference type="GO" id="GO:0005886">
    <property type="term" value="C:plasma membrane"/>
    <property type="evidence" value="ECO:0007669"/>
    <property type="project" value="UniProtKB-SubCell"/>
</dbReference>
<dbReference type="GO" id="GO:0062054">
    <property type="term" value="F:fluoride channel activity"/>
    <property type="evidence" value="ECO:0007669"/>
    <property type="project" value="UniProtKB-UniRule"/>
</dbReference>
<dbReference type="GO" id="GO:0046872">
    <property type="term" value="F:metal ion binding"/>
    <property type="evidence" value="ECO:0007669"/>
    <property type="project" value="UniProtKB-KW"/>
</dbReference>
<dbReference type="GO" id="GO:0140114">
    <property type="term" value="P:cellular detoxification of fluoride"/>
    <property type="evidence" value="ECO:0007669"/>
    <property type="project" value="UniProtKB-UniRule"/>
</dbReference>
<dbReference type="HAMAP" id="MF_00454">
    <property type="entry name" value="FluC"/>
    <property type="match status" value="1"/>
</dbReference>
<dbReference type="InterPro" id="IPR003691">
    <property type="entry name" value="FluC"/>
</dbReference>
<dbReference type="NCBIfam" id="TIGR00494">
    <property type="entry name" value="crcB"/>
    <property type="match status" value="1"/>
</dbReference>
<dbReference type="NCBIfam" id="NF010792">
    <property type="entry name" value="PRK14196.1"/>
    <property type="match status" value="1"/>
</dbReference>
<dbReference type="PANTHER" id="PTHR28259">
    <property type="entry name" value="FLUORIDE EXPORT PROTEIN 1-RELATED"/>
    <property type="match status" value="1"/>
</dbReference>
<dbReference type="PANTHER" id="PTHR28259:SF1">
    <property type="entry name" value="FLUORIDE EXPORT PROTEIN 1-RELATED"/>
    <property type="match status" value="1"/>
</dbReference>
<dbReference type="Pfam" id="PF02537">
    <property type="entry name" value="CRCB"/>
    <property type="match status" value="1"/>
</dbReference>